<accession>Q6J6C2</accession>
<accession>B9PPY1</accession>
<accession>S7V0T9</accession>
<evidence type="ECO:0000255" key="1"/>
<evidence type="ECO:0000255" key="2">
    <source>
        <dbReference type="PROSITE-ProRule" id="PRU01103"/>
    </source>
</evidence>
<evidence type="ECO:0000255" key="3">
    <source>
        <dbReference type="RuleBase" id="RU000454"/>
    </source>
</evidence>
<evidence type="ECO:0000256" key="4">
    <source>
        <dbReference type="SAM" id="MobiDB-lite"/>
    </source>
</evidence>
<evidence type="ECO:0000269" key="5">
    <source>
    </source>
</evidence>
<evidence type="ECO:0000303" key="6">
    <source>
    </source>
</evidence>
<evidence type="ECO:0000303" key="7">
    <source>
    </source>
</evidence>
<evidence type="ECO:0000305" key="8"/>
<evidence type="ECO:0000312" key="9">
    <source>
        <dbReference type="EMBL" id="AAT10592.1"/>
    </source>
</evidence>
<evidence type="ECO:0000312" key="10">
    <source>
        <dbReference type="EMBL" id="KAF4638473.1"/>
    </source>
</evidence>
<reference evidence="9" key="1">
    <citation type="journal article" date="2004" name="Curr. Opin. Microbiol.">
        <title>Host cell invasion by the apicomplexans: the significance of microneme protein proteolysis.</title>
        <authorList>
            <person name="Dowse T."/>
            <person name="Soldati D."/>
        </authorList>
    </citation>
    <scope>NUCLEOTIDE SEQUENCE [MRNA]</scope>
    <source>
        <strain evidence="9">ATCC 50611 / Me49</strain>
    </source>
</reference>
<reference key="2">
    <citation type="submission" date="2020-03" db="EMBL/GenBank/DDBJ databases">
        <title>Genome sequence of Toxoplasma gondii RH-88 strain.</title>
        <authorList>
            <person name="Lorenzi H.A."/>
            <person name="Venepally P."/>
            <person name="Rozenberg A."/>
            <person name="Sibley D."/>
        </authorList>
    </citation>
    <scope>NUCLEOTIDE SEQUENCE [LARGE SCALE GENOMIC DNA]</scope>
    <source>
        <strain>RH-88</strain>
    </source>
</reference>
<reference evidence="8" key="3">
    <citation type="journal article" date="2017" name="Elife">
        <title>A druggable secretory protein maturase of Toxoplasma essential for invasion and egress.</title>
        <authorList>
            <person name="Dogga S.K."/>
            <person name="Mukherjee B."/>
            <person name="Jacot D."/>
            <person name="Kockmann T."/>
            <person name="Molino L."/>
            <person name="Hammoudi P.M."/>
            <person name="Hartkoorn R.C."/>
            <person name="Hehl A.B."/>
            <person name="Soldati-Favre D."/>
        </authorList>
    </citation>
    <scope>FUNCTION</scope>
    <scope>CATALYTIC ACTIVITY</scope>
    <scope>ACTIVITY REGULATION</scope>
    <scope>SUBCELLULAR LOCATION</scope>
    <scope>DEVELOPMENTAL STAGE</scope>
    <scope>DISRUPTION PHENOTYPE</scope>
    <scope>MUTAGENESIS OF ASP-299</scope>
    <source>
        <strain evidence="5">RH</strain>
    </source>
</reference>
<sequence length="643" mass="69132">MEGRTTAGRATPAGFWLFSCCLASVLWSANALIPAGKSAGSSFLAATSSQSSEEAPREFPGHLSNSQIASETGSALKIEEIASSGSAPEVSGAAGASASKTSEKPIRPYHTGPSSRSSAYSASSGIPLCHTCSSFDAANGGCRLCVHGEVASDFLMPMMPIRNIDTHREETLSRLEANHRTHLNEKKNFYVLRGKGPFGSLGNLPGTPGLDAAIAFGLSSPDLPSASFAQIKNKDSSDSGDVAAVGEETDSAVADGSKTLDLDLKLAETSVPILQMKDSQYVGVIGIGTPPQFVQPIFDTGSTNLWVVGSKCTDDTCTKVTRFDPSASKTFRAANPPVHLDITFGTGRIEGSTGIDDFTVGPFLVKGQSFGLVESEGGHNMHGNIFKTINFEGIVGLAFPEMSSTGTVPIYDNIISQGTLKENEFAFYMAKGSQVSALFFGGVDPRFYEAPIHMFPVTREHYWETSLDAIYIGDKKFCCEEGTKNYVILDSGTSFNTMPSGELGKLLDMIPSKECNLDDPEFTSDFPTITYVIGGVKFPLTPEQYLVRSKKNECKPAYMQIDVPSQFGHAYILGSVAFMRHYYTVFRRSDGTRPSLVGIARAVHNDDNSAYLSNVLNEYPGAHIRKEDLMMERSMSAPSMREL</sequence>
<keyword id="KW-0064">Aspartyl protease</keyword>
<keyword id="KW-0378">Hydrolase</keyword>
<keyword id="KW-0472">Membrane</keyword>
<keyword id="KW-0645">Protease</keyword>
<keyword id="KW-1185">Reference proteome</keyword>
<keyword id="KW-0732">Signal</keyword>
<protein>
    <recommendedName>
        <fullName evidence="7">Aspartic protease 3</fullName>
        <shortName evidence="7">TgASP3</shortName>
        <ecNumber evidence="5">3.4.23.-</ecNumber>
    </recommendedName>
    <alternativeName>
        <fullName evidence="6">Toxomepsin 3</fullName>
    </alternativeName>
</protein>
<feature type="signal peptide" evidence="1">
    <location>
        <begin position="1"/>
        <end position="31"/>
    </location>
</feature>
<feature type="chain" id="PRO_5033705439" description="Aspartic protease 3" evidence="1">
    <location>
        <begin position="32"/>
        <end position="643"/>
    </location>
</feature>
<feature type="domain" description="Peptidase A1" evidence="2">
    <location>
        <begin position="281"/>
        <end position="600"/>
    </location>
</feature>
<feature type="region of interest" description="Disordered" evidence="4">
    <location>
        <begin position="87"/>
        <end position="116"/>
    </location>
</feature>
<feature type="compositionally biased region" description="Low complexity" evidence="4">
    <location>
        <begin position="87"/>
        <end position="99"/>
    </location>
</feature>
<feature type="active site" evidence="2">
    <location>
        <position position="299"/>
    </location>
</feature>
<feature type="active site" evidence="2">
    <location>
        <position position="490"/>
    </location>
</feature>
<feature type="mutagenesis site" description="Severe defect in the tachyzoite lytic cycle. Auto-processing is severely impaired. Impaired microneme protein MIC6 processing. Impaired rhoptry protein ROP2-4 processing." evidence="5">
    <original>D</original>
    <variation>A</variation>
    <location>
        <position position="299"/>
    </location>
</feature>
<dbReference type="EC" id="3.4.23.-" evidence="5"/>
<dbReference type="EMBL" id="AY592973">
    <property type="protein sequence ID" value="AAT10592.1"/>
    <property type="molecule type" value="mRNA"/>
</dbReference>
<dbReference type="EMBL" id="JAAUHK010000197">
    <property type="protein sequence ID" value="KAF4638473.1"/>
    <property type="molecule type" value="Genomic_DNA"/>
</dbReference>
<dbReference type="SMR" id="Q6J6C2"/>
<dbReference type="MEROPS" id="A01.A95"/>
<dbReference type="VEuPathDB" id="ToxoDB:TGARI_246550"/>
<dbReference type="VEuPathDB" id="ToxoDB:TGCAST_246550"/>
<dbReference type="VEuPathDB" id="ToxoDB:TGCOUG_246550"/>
<dbReference type="VEuPathDB" id="ToxoDB:TGDOM2_246550"/>
<dbReference type="VEuPathDB" id="ToxoDB:TGFOU_246550"/>
<dbReference type="VEuPathDB" id="ToxoDB:TGGT1_246550"/>
<dbReference type="VEuPathDB" id="ToxoDB:TGMAS_246550"/>
<dbReference type="VEuPathDB" id="ToxoDB:TGME49_246550"/>
<dbReference type="VEuPathDB" id="ToxoDB:TGP89_246550"/>
<dbReference type="VEuPathDB" id="ToxoDB:TGPRC2_246550"/>
<dbReference type="VEuPathDB" id="ToxoDB:TGRH88_060810"/>
<dbReference type="VEuPathDB" id="ToxoDB:TGRUB_246550"/>
<dbReference type="VEuPathDB" id="ToxoDB:TGVAND_246550"/>
<dbReference type="VEuPathDB" id="ToxoDB:TGVEG_246550"/>
<dbReference type="Proteomes" id="UP000557509">
    <property type="component" value="Unassembled WGS sequence"/>
</dbReference>
<dbReference type="GO" id="GO:0012505">
    <property type="term" value="C:endomembrane system"/>
    <property type="evidence" value="ECO:0007669"/>
    <property type="project" value="UniProtKB-SubCell"/>
</dbReference>
<dbReference type="GO" id="GO:0016020">
    <property type="term" value="C:membrane"/>
    <property type="evidence" value="ECO:0007669"/>
    <property type="project" value="UniProtKB-KW"/>
</dbReference>
<dbReference type="GO" id="GO:0004190">
    <property type="term" value="F:aspartic-type endopeptidase activity"/>
    <property type="evidence" value="ECO:0000314"/>
    <property type="project" value="UniProtKB"/>
</dbReference>
<dbReference type="GO" id="GO:0016540">
    <property type="term" value="P:protein autoprocessing"/>
    <property type="evidence" value="ECO:0000314"/>
    <property type="project" value="UniProtKB"/>
</dbReference>
<dbReference type="GO" id="GO:0016485">
    <property type="term" value="P:protein processing"/>
    <property type="evidence" value="ECO:0000314"/>
    <property type="project" value="UniProtKB"/>
</dbReference>
<dbReference type="FunFam" id="2.40.70.10:FF:000115">
    <property type="entry name" value="Lysosomal aspartic protease"/>
    <property type="match status" value="1"/>
</dbReference>
<dbReference type="Gene3D" id="2.40.70.10">
    <property type="entry name" value="Acid Proteases"/>
    <property type="match status" value="2"/>
</dbReference>
<dbReference type="InterPro" id="IPR001461">
    <property type="entry name" value="Aspartic_peptidase_A1"/>
</dbReference>
<dbReference type="InterPro" id="IPR001969">
    <property type="entry name" value="Aspartic_peptidase_AS"/>
</dbReference>
<dbReference type="InterPro" id="IPR033121">
    <property type="entry name" value="PEPTIDASE_A1"/>
</dbReference>
<dbReference type="InterPro" id="IPR021109">
    <property type="entry name" value="Peptidase_aspartic_dom_sf"/>
</dbReference>
<dbReference type="PANTHER" id="PTHR47966">
    <property type="entry name" value="BETA-SITE APP-CLEAVING ENZYME, ISOFORM A-RELATED"/>
    <property type="match status" value="1"/>
</dbReference>
<dbReference type="PANTHER" id="PTHR47966:SF51">
    <property type="entry name" value="BETA-SITE APP-CLEAVING ENZYME, ISOFORM A-RELATED"/>
    <property type="match status" value="1"/>
</dbReference>
<dbReference type="Pfam" id="PF00026">
    <property type="entry name" value="Asp"/>
    <property type="match status" value="1"/>
</dbReference>
<dbReference type="PRINTS" id="PR00792">
    <property type="entry name" value="PEPSIN"/>
</dbReference>
<dbReference type="SUPFAM" id="SSF50630">
    <property type="entry name" value="Acid proteases"/>
    <property type="match status" value="1"/>
</dbReference>
<dbReference type="PROSITE" id="PS00141">
    <property type="entry name" value="ASP_PROTEASE"/>
    <property type="match status" value="1"/>
</dbReference>
<dbReference type="PROSITE" id="PS51767">
    <property type="entry name" value="PEPTIDASE_A1"/>
    <property type="match status" value="1"/>
</dbReference>
<name>ASP3_TOXGO</name>
<gene>
    <name evidence="7" type="primary">ASP3</name>
    <name evidence="10" type="ORF">TGRH88_060810</name>
</gene>
<organism evidence="9">
    <name type="scientific">Toxoplasma gondii</name>
    <dbReference type="NCBI Taxonomy" id="5811"/>
    <lineage>
        <taxon>Eukaryota</taxon>
        <taxon>Sar</taxon>
        <taxon>Alveolata</taxon>
        <taxon>Apicomplexa</taxon>
        <taxon>Conoidasida</taxon>
        <taxon>Coccidia</taxon>
        <taxon>Eucoccidiorida</taxon>
        <taxon>Eimeriorina</taxon>
        <taxon>Sarcocystidae</taxon>
        <taxon>Toxoplasma</taxon>
    </lineage>
</organism>
<comment type="function">
    <text evidence="5">Required for the processing-mediated maturation of a subset of microneme proteins, such as MIC6, and rhoptry proteins, such as ROP1 (PubMed:28898199). By regulating microneme and rhoptry processing, plays an essential role in the lysis of the host cell membrane during egress and in rhoptry content discharge, which is required for invasion of host cells (PubMed:28898199).</text>
</comment>
<comment type="activity regulation">
    <text evidence="5">Inhibited by 49c, a hydroxyethylamine scaffold-based compound.</text>
</comment>
<comment type="subcellular location">
    <subcellularLocation>
        <location evidence="5">Endomembrane system</location>
    </subcellularLocation>
    <text evidence="5">Localizes to a post-Golgi compartment and an endosome-like compartment in the secretory pathway.</text>
</comment>
<comment type="developmental stage">
    <text evidence="5">Expressed in tachyzoites (at protein level).</text>
</comment>
<comment type="disruption phenotype">
    <text evidence="5">Conditional knockout in tachyzoites results in a severe defect in the lytic cycle due to a failure to invade and egress host cells (PubMed:28898199). Specifically, exit from the host cells upon both natural and induced egress is delayed, and parasites are trapped in spherical detached host cells, eventually rupturing the host cell membrane (PubMed:28898199). Secretion of rhoptry content and processing of several rhoptry proteins, including ROP1 and ROP13, are impaired (PubMed:28898199). Microneme secretion is normal; however, processing of several microneme proteins, including M2AP, MIC3 and MIC6, is impaired (PubMed:28898199). Also, post-exocytosis processing of protease SUB1 is impaired. Parasite intracellular growth, parasite attachment or gliding motility are not affected (PubMed:28898199). Mitochondrion and apicoplast morphology is normal (PubMed:28898199).</text>
</comment>
<comment type="similarity">
    <text evidence="3">Belongs to the peptidase A1 family.</text>
</comment>
<proteinExistence type="evidence at protein level"/>